<accession>B4F6V6</accession>
<reference evidence="9" key="1">
    <citation type="submission" date="2008-07" db="EMBL/GenBank/DDBJ databases">
        <authorList>
            <consortium name="NIH - Xenopus Gene Collection (XGC) project"/>
        </authorList>
    </citation>
    <scope>NUCLEOTIDE SEQUENCE [LARGE SCALE MRNA]</scope>
    <source>
        <tissue evidence="9">Testis</tissue>
    </source>
</reference>
<proteinExistence type="evidence at transcript level"/>
<protein>
    <recommendedName>
        <fullName evidence="2">Pre-B-cell leukemia transcription factor 1</fullName>
    </recommendedName>
    <alternativeName>
        <fullName evidence="2">Homeobox protein pbx1</fullName>
    </alternativeName>
</protein>
<comment type="function">
    <text evidence="3">Acts as a transcriptional activator in complex with isoform 2 of meis1, to induce posterior neural and neural crest gene expression, and thereby specify hindbrain and neural crest cell fate. Binds to a highly conserved region in the promoter of the neural crest gene zic3. Required for the nuclear transport or retention of meis1 (By similarity).</text>
</comment>
<comment type="subunit">
    <text evidence="1">Forms a heterodimer with meis1; the interaction is necessary for neural fate induction.</text>
</comment>
<comment type="subcellular location">
    <subcellularLocation>
        <location evidence="2">Nucleus</location>
    </subcellularLocation>
</comment>
<comment type="miscellaneous">
    <text evidence="8">The displayed sequence corresponds to the ortholog of the mammalian isoform B sequences. There is currently no X.tropicalis ortholog sequence for isoform A.</text>
</comment>
<comment type="similarity">
    <text evidence="4">Belongs to the TALE/PBX homeobox family.</text>
</comment>
<gene>
    <name evidence="2" type="primary">pbx1</name>
</gene>
<sequence>MDDQPRLMHSHPGVGMAGHPSLSQHMQDGTGANEGEGGRKQDIGDILQQIMTITDQSLDEAQARKHALNCHRMKPALFNVLCEIKEKTVLSIRGAQEEEPADPQLMRLDNMLLAEGVAGPEKGGGSAAAAAAAAASGGAGADNSAEHSDYRAKLSQIRQIYHTELEKYEQACNEFTTHVMNLLREQSRTRPISPKEIERMVSIIHRKFSSIQMQLKQSTCEAVMILRSRFLDARRKRRNFNKQATEILNEYFYSHLSNPYPSEEAKEELAKKCAITVSQVSNWFGNKRIRYKKNIGKFQEEANIYAAKTAVNATNVSVHGSQANSPSTPSSAGGYPSPCYQSDRRIQ</sequence>
<keyword id="KW-0010">Activator</keyword>
<keyword id="KW-0217">Developmental protein</keyword>
<keyword id="KW-0221">Differentiation</keyword>
<keyword id="KW-0238">DNA-binding</keyword>
<keyword id="KW-0371">Homeobox</keyword>
<keyword id="KW-0524">Neurogenesis</keyword>
<keyword id="KW-0539">Nucleus</keyword>
<keyword id="KW-1185">Reference proteome</keyword>
<keyword id="KW-0804">Transcription</keyword>
<keyword id="KW-0805">Transcription regulation</keyword>
<organism>
    <name type="scientific">Xenopus tropicalis</name>
    <name type="common">Western clawed frog</name>
    <name type="synonym">Silurana tropicalis</name>
    <dbReference type="NCBI Taxonomy" id="8364"/>
    <lineage>
        <taxon>Eukaryota</taxon>
        <taxon>Metazoa</taxon>
        <taxon>Chordata</taxon>
        <taxon>Craniata</taxon>
        <taxon>Vertebrata</taxon>
        <taxon>Euteleostomi</taxon>
        <taxon>Amphibia</taxon>
        <taxon>Batrachia</taxon>
        <taxon>Anura</taxon>
        <taxon>Pipoidea</taxon>
        <taxon>Pipidae</taxon>
        <taxon>Xenopodinae</taxon>
        <taxon>Xenopus</taxon>
        <taxon>Silurana</taxon>
    </lineage>
</organism>
<evidence type="ECO:0000250" key="1"/>
<evidence type="ECO:0000250" key="2">
    <source>
        <dbReference type="UniProtKB" id="P40424"/>
    </source>
</evidence>
<evidence type="ECO:0000250" key="3">
    <source>
        <dbReference type="UniProtKB" id="Q8QGC4"/>
    </source>
</evidence>
<evidence type="ECO:0000255" key="4"/>
<evidence type="ECO:0000255" key="5">
    <source>
        <dbReference type="PROSITE-ProRule" id="PRU00108"/>
    </source>
</evidence>
<evidence type="ECO:0000255" key="6">
    <source>
        <dbReference type="PROSITE-ProRule" id="PRU01322"/>
    </source>
</evidence>
<evidence type="ECO:0000256" key="7">
    <source>
        <dbReference type="SAM" id="MobiDB-lite"/>
    </source>
</evidence>
<evidence type="ECO:0000305" key="8"/>
<evidence type="ECO:0000312" key="9">
    <source>
        <dbReference type="EMBL" id="AAI68027.1"/>
    </source>
</evidence>
<dbReference type="EMBL" id="BC168027">
    <property type="protein sequence ID" value="AAI68027.1"/>
    <property type="molecule type" value="mRNA"/>
</dbReference>
<dbReference type="RefSeq" id="NP_001135549.1">
    <property type="nucleotide sequence ID" value="NM_001142077.1"/>
</dbReference>
<dbReference type="SMR" id="B4F6V6"/>
<dbReference type="STRING" id="8364.ENSXETP00000011174"/>
<dbReference type="PaxDb" id="8364-ENSXETP00000011400"/>
<dbReference type="GeneID" id="100216094"/>
<dbReference type="KEGG" id="xtr:100216094"/>
<dbReference type="AGR" id="Xenbase:XB-GENE-1217592"/>
<dbReference type="CTD" id="5087"/>
<dbReference type="Xenbase" id="XB-GENE-1217592">
    <property type="gene designation" value="pbx1"/>
</dbReference>
<dbReference type="eggNOG" id="KOG0774">
    <property type="taxonomic scope" value="Eukaryota"/>
</dbReference>
<dbReference type="HOGENOM" id="CLU_041153_1_0_1"/>
<dbReference type="InParanoid" id="B4F6V6"/>
<dbReference type="OrthoDB" id="4187154at2759"/>
<dbReference type="Proteomes" id="UP000008143">
    <property type="component" value="Chromosome 4"/>
</dbReference>
<dbReference type="Bgee" id="ENSXETG00000010464">
    <property type="expression patterns" value="Expressed in brain and 14 other cell types or tissues"/>
</dbReference>
<dbReference type="ExpressionAtlas" id="B4F6V6">
    <property type="expression patterns" value="baseline"/>
</dbReference>
<dbReference type="GO" id="GO:0005634">
    <property type="term" value="C:nucleus"/>
    <property type="evidence" value="ECO:0000250"/>
    <property type="project" value="UniProtKB"/>
</dbReference>
<dbReference type="GO" id="GO:0005667">
    <property type="term" value="C:transcription regulator complex"/>
    <property type="evidence" value="ECO:0000250"/>
    <property type="project" value="UniProtKB"/>
</dbReference>
<dbReference type="GO" id="GO:0000981">
    <property type="term" value="F:DNA-binding transcription factor activity, RNA polymerase II-specific"/>
    <property type="evidence" value="ECO:0007669"/>
    <property type="project" value="InterPro"/>
</dbReference>
<dbReference type="GO" id="GO:0043565">
    <property type="term" value="F:sequence-specific DNA binding"/>
    <property type="evidence" value="ECO:0000250"/>
    <property type="project" value="UniProtKB"/>
</dbReference>
<dbReference type="GO" id="GO:0007399">
    <property type="term" value="P:nervous system development"/>
    <property type="evidence" value="ECO:0007669"/>
    <property type="project" value="UniProtKB-KW"/>
</dbReference>
<dbReference type="GO" id="GO:0014036">
    <property type="term" value="P:neural crest cell fate specification"/>
    <property type="evidence" value="ECO:0000250"/>
    <property type="project" value="UniProtKB"/>
</dbReference>
<dbReference type="GO" id="GO:0045893">
    <property type="term" value="P:positive regulation of DNA-templated transcription"/>
    <property type="evidence" value="ECO:0000250"/>
    <property type="project" value="UniProtKB"/>
</dbReference>
<dbReference type="GO" id="GO:0045944">
    <property type="term" value="P:positive regulation of transcription by RNA polymerase II"/>
    <property type="evidence" value="ECO:0000250"/>
    <property type="project" value="UniProtKB"/>
</dbReference>
<dbReference type="CDD" id="cd00086">
    <property type="entry name" value="homeodomain"/>
    <property type="match status" value="1"/>
</dbReference>
<dbReference type="FunFam" id="1.10.10.60:FF:000277">
    <property type="entry name" value="Pre-B-cell leukemia transcription factor 1"/>
    <property type="match status" value="1"/>
</dbReference>
<dbReference type="Gene3D" id="1.10.10.60">
    <property type="entry name" value="Homeodomain-like"/>
    <property type="match status" value="1"/>
</dbReference>
<dbReference type="InterPro" id="IPR001356">
    <property type="entry name" value="HD"/>
</dbReference>
<dbReference type="InterPro" id="IPR017970">
    <property type="entry name" value="Homeobox_CS"/>
</dbReference>
<dbReference type="InterPro" id="IPR009057">
    <property type="entry name" value="Homeodomain-like_sf"/>
</dbReference>
<dbReference type="InterPro" id="IPR008422">
    <property type="entry name" value="KN_HD"/>
</dbReference>
<dbReference type="InterPro" id="IPR005542">
    <property type="entry name" value="PBX_PBC_dom"/>
</dbReference>
<dbReference type="InterPro" id="IPR050224">
    <property type="entry name" value="TALE_homeobox"/>
</dbReference>
<dbReference type="PANTHER" id="PTHR11850">
    <property type="entry name" value="HOMEOBOX PROTEIN TRANSCRIPTION FACTORS"/>
    <property type="match status" value="1"/>
</dbReference>
<dbReference type="Pfam" id="PF05920">
    <property type="entry name" value="Homeobox_KN"/>
    <property type="match status" value="1"/>
</dbReference>
<dbReference type="Pfam" id="PF03792">
    <property type="entry name" value="PBC"/>
    <property type="match status" value="1"/>
</dbReference>
<dbReference type="SMART" id="SM00389">
    <property type="entry name" value="HOX"/>
    <property type="match status" value="1"/>
</dbReference>
<dbReference type="SUPFAM" id="SSF46689">
    <property type="entry name" value="Homeodomain-like"/>
    <property type="match status" value="1"/>
</dbReference>
<dbReference type="PROSITE" id="PS00027">
    <property type="entry name" value="HOMEOBOX_1"/>
    <property type="match status" value="1"/>
</dbReference>
<dbReference type="PROSITE" id="PS50071">
    <property type="entry name" value="HOMEOBOX_2"/>
    <property type="match status" value="1"/>
</dbReference>
<dbReference type="PROSITE" id="PS51978">
    <property type="entry name" value="PBC"/>
    <property type="match status" value="1"/>
</dbReference>
<feature type="chain" id="PRO_0000365099" description="Pre-B-cell leukemia transcription factor 1">
    <location>
        <begin position="1"/>
        <end position="347"/>
    </location>
</feature>
<feature type="domain" description="PBC" evidence="6">
    <location>
        <begin position="38"/>
        <end position="232"/>
    </location>
</feature>
<feature type="DNA-binding region" description="Homeobox; TALE-type" evidence="5">
    <location>
        <begin position="233"/>
        <end position="295"/>
    </location>
</feature>
<feature type="region of interest" description="Disordered" evidence="7">
    <location>
        <begin position="1"/>
        <end position="40"/>
    </location>
</feature>
<feature type="region of interest" description="PBC-A" evidence="6">
    <location>
        <begin position="45"/>
        <end position="124"/>
    </location>
</feature>
<feature type="region of interest" description="PBC-B" evidence="6">
    <location>
        <begin position="127"/>
        <end position="232"/>
    </location>
</feature>
<feature type="region of interest" description="Disordered" evidence="7">
    <location>
        <begin position="318"/>
        <end position="347"/>
    </location>
</feature>
<feature type="compositionally biased region" description="Polar residues" evidence="7">
    <location>
        <begin position="318"/>
        <end position="331"/>
    </location>
</feature>
<name>PBX1_XENTR</name>